<protein>
    <recommendedName>
        <fullName>Phospho-2-dehydro-3-deoxyheptonate aldolase</fullName>
        <ecNumber>2.5.1.54</ecNumber>
    </recommendedName>
    <alternativeName>
        <fullName>3-deoxy-D-arabino-heptulosonate 7-phosphate synthase</fullName>
    </alternativeName>
    <alternativeName>
        <fullName>DAHP synthase</fullName>
    </alternativeName>
    <alternativeName>
        <fullName>Phospho-2-keto-3-deoxyheptonate aldolase</fullName>
    </alternativeName>
</protein>
<gene>
    <name type="primary">aro-8</name>
    <name type="synonym">aroh</name>
    <name type="ORF">NCU02785</name>
</gene>
<organism>
    <name type="scientific">Neurospora crassa (strain ATCC 24698 / 74-OR23-1A / CBS 708.71 / DSM 1257 / FGSC 987)</name>
    <dbReference type="NCBI Taxonomy" id="367110"/>
    <lineage>
        <taxon>Eukaryota</taxon>
        <taxon>Fungi</taxon>
        <taxon>Dikarya</taxon>
        <taxon>Ascomycota</taxon>
        <taxon>Pezizomycotina</taxon>
        <taxon>Sordariomycetes</taxon>
        <taxon>Sordariomycetidae</taxon>
        <taxon>Sordariales</taxon>
        <taxon>Sordariaceae</taxon>
        <taxon>Neurospora</taxon>
    </lineage>
</organism>
<feature type="chain" id="PRO_0000140853" description="Phospho-2-dehydro-3-deoxyheptonate aldolase">
    <location>
        <begin position="1"/>
        <end position="481"/>
    </location>
</feature>
<feature type="region of interest" description="Disordered" evidence="2">
    <location>
        <begin position="1"/>
        <end position="22"/>
    </location>
</feature>
<feature type="sequence conflict" description="In Ref. 2; AA sequence." evidence="3" ref="2">
    <original>R</original>
    <variation>T</variation>
    <location>
        <position position="251"/>
    </location>
</feature>
<feature type="sequence conflict" description="In Ref. 2; AA sequence." evidence="3" ref="2">
    <original>H</original>
    <variation>A</variation>
    <location>
        <position position="255"/>
    </location>
</feature>
<feature type="sequence conflict" description="In Ref. 2; AA sequence." evidence="3" ref="2">
    <original>V</original>
    <variation>Q</variation>
    <location>
        <position position="258"/>
    </location>
</feature>
<evidence type="ECO:0000250" key="1"/>
<evidence type="ECO:0000256" key="2">
    <source>
        <dbReference type="SAM" id="MobiDB-lite"/>
    </source>
</evidence>
<evidence type="ECO:0000305" key="3"/>
<keyword id="KW-0028">Amino-acid biosynthesis</keyword>
<keyword id="KW-0057">Aromatic amino acid biosynthesis</keyword>
<keyword id="KW-0903">Direct protein sequencing</keyword>
<keyword id="KW-1185">Reference proteome</keyword>
<keyword id="KW-0808">Transferase</keyword>
<reference key="1">
    <citation type="journal article" date="2003" name="Nature">
        <title>The genome sequence of the filamentous fungus Neurospora crassa.</title>
        <authorList>
            <person name="Galagan J.E."/>
            <person name="Calvo S.E."/>
            <person name="Borkovich K.A."/>
            <person name="Selker E.U."/>
            <person name="Read N.D."/>
            <person name="Jaffe D.B."/>
            <person name="FitzHugh W."/>
            <person name="Ma L.-J."/>
            <person name="Smirnov S."/>
            <person name="Purcell S."/>
            <person name="Rehman B."/>
            <person name="Elkins T."/>
            <person name="Engels R."/>
            <person name="Wang S."/>
            <person name="Nielsen C.B."/>
            <person name="Butler J."/>
            <person name="Endrizzi M."/>
            <person name="Qui D."/>
            <person name="Ianakiev P."/>
            <person name="Bell-Pedersen D."/>
            <person name="Nelson M.A."/>
            <person name="Werner-Washburne M."/>
            <person name="Selitrennikoff C.P."/>
            <person name="Kinsey J.A."/>
            <person name="Braun E.L."/>
            <person name="Zelter A."/>
            <person name="Schulte U."/>
            <person name="Kothe G.O."/>
            <person name="Jedd G."/>
            <person name="Mewes H.-W."/>
            <person name="Staben C."/>
            <person name="Marcotte E."/>
            <person name="Greenberg D."/>
            <person name="Roy A."/>
            <person name="Foley K."/>
            <person name="Naylor J."/>
            <person name="Stange-Thomann N."/>
            <person name="Barrett R."/>
            <person name="Gnerre S."/>
            <person name="Kamal M."/>
            <person name="Kamvysselis M."/>
            <person name="Mauceli E.W."/>
            <person name="Bielke C."/>
            <person name="Rudd S."/>
            <person name="Frishman D."/>
            <person name="Krystofova S."/>
            <person name="Rasmussen C."/>
            <person name="Metzenberg R.L."/>
            <person name="Perkins D.D."/>
            <person name="Kroken S."/>
            <person name="Cogoni C."/>
            <person name="Macino G."/>
            <person name="Catcheside D.E.A."/>
            <person name="Li W."/>
            <person name="Pratt R.J."/>
            <person name="Osmani S.A."/>
            <person name="DeSouza C.P.C."/>
            <person name="Glass N.L."/>
            <person name="Orbach M.J."/>
            <person name="Berglund J.A."/>
            <person name="Voelker R."/>
            <person name="Yarden O."/>
            <person name="Plamann M."/>
            <person name="Seiler S."/>
            <person name="Dunlap J.C."/>
            <person name="Radford A."/>
            <person name="Aramayo R."/>
            <person name="Natvig D.O."/>
            <person name="Alex L.A."/>
            <person name="Mannhaupt G."/>
            <person name="Ebbole D.J."/>
            <person name="Freitag M."/>
            <person name="Paulsen I."/>
            <person name="Sachs M.S."/>
            <person name="Lander E.S."/>
            <person name="Nusbaum C."/>
            <person name="Birren B.W."/>
        </authorList>
    </citation>
    <scope>NUCLEOTIDE SEQUENCE [LARGE SCALE GENOMIC DNA]</scope>
    <source>
        <strain>ATCC 24698 / 74-OR23-1A / CBS 708.71 / DSM 1257 / FGSC 987</strain>
    </source>
</reference>
<reference key="2">
    <citation type="journal article" date="1996" name="Microbiology">
        <title>Evidence for a novel class of microbial 3-deoxy-D-arabino-heptulosonate-7-phosphate synthase in Streptomyces coelicolor A3(2), Streptomyces rimosus and Neurospora crassa.</title>
        <authorList>
            <person name="Walker G.E."/>
            <person name="Dunbar B."/>
            <person name="Hunter I.S."/>
            <person name="Nimmo H.G."/>
            <person name="Coggins J.R."/>
        </authorList>
    </citation>
    <scope>PROTEIN SEQUENCE OF 43-72 AND 204-258</scope>
    <source>
        <strain>ATCC 24698 / 74-OR23-1A / CBS 708.71 / DSM 1257 / FGSC 987</strain>
    </source>
</reference>
<name>AROF_NEUCR</name>
<dbReference type="EC" id="2.5.1.54"/>
<dbReference type="EMBL" id="CM002236">
    <property type="protein sequence ID" value="EAA34705.1"/>
    <property type="molecule type" value="Genomic_DNA"/>
</dbReference>
<dbReference type="RefSeq" id="XP_963941.1">
    <property type="nucleotide sequence ID" value="XM_958848.2"/>
</dbReference>
<dbReference type="SMR" id="P80576"/>
<dbReference type="STRING" id="367110.P80576"/>
<dbReference type="PaxDb" id="5141-EFNCRP00000002275"/>
<dbReference type="EnsemblFungi" id="EAA34705">
    <property type="protein sequence ID" value="EAA34705"/>
    <property type="gene ID" value="NCU02785"/>
</dbReference>
<dbReference type="GeneID" id="3880090"/>
<dbReference type="KEGG" id="ncr:NCU02785"/>
<dbReference type="VEuPathDB" id="FungiDB:NCU02785"/>
<dbReference type="HOGENOM" id="CLU_026885_0_1_1"/>
<dbReference type="InParanoid" id="P80576"/>
<dbReference type="OMA" id="FKVMMQM"/>
<dbReference type="OrthoDB" id="2338at2759"/>
<dbReference type="UniPathway" id="UPA00053">
    <property type="reaction ID" value="UER00084"/>
</dbReference>
<dbReference type="Proteomes" id="UP000001805">
    <property type="component" value="Chromosome 1, Linkage Group I"/>
</dbReference>
<dbReference type="GO" id="GO:0003849">
    <property type="term" value="F:3-deoxy-7-phosphoheptulonate synthase activity"/>
    <property type="evidence" value="ECO:0007669"/>
    <property type="project" value="UniProtKB-EC"/>
</dbReference>
<dbReference type="GO" id="GO:0008652">
    <property type="term" value="P:amino acid biosynthetic process"/>
    <property type="evidence" value="ECO:0007669"/>
    <property type="project" value="UniProtKB-KW"/>
</dbReference>
<dbReference type="GO" id="GO:0009073">
    <property type="term" value="P:aromatic amino acid family biosynthetic process"/>
    <property type="evidence" value="ECO:0007669"/>
    <property type="project" value="UniProtKB-KW"/>
</dbReference>
<dbReference type="GO" id="GO:0009423">
    <property type="term" value="P:chorismate biosynthetic process"/>
    <property type="evidence" value="ECO:0007669"/>
    <property type="project" value="UniProtKB-UniPathway"/>
</dbReference>
<dbReference type="Gene3D" id="3.20.20.70">
    <property type="entry name" value="Aldolase class I"/>
    <property type="match status" value="2"/>
</dbReference>
<dbReference type="InterPro" id="IPR013785">
    <property type="entry name" value="Aldolase_TIM"/>
</dbReference>
<dbReference type="InterPro" id="IPR002480">
    <property type="entry name" value="DAHP_synth_2"/>
</dbReference>
<dbReference type="PANTHER" id="PTHR21337:SF0">
    <property type="entry name" value="PHOSPHO-2-DEHYDRO-3-DEOXYHEPTONATE ALDOLASE"/>
    <property type="match status" value="1"/>
</dbReference>
<dbReference type="PANTHER" id="PTHR21337">
    <property type="entry name" value="PHOSPHO-2-DEHYDRO-3-DEOXYHEPTONATE ALDOLASE 1, 2"/>
    <property type="match status" value="1"/>
</dbReference>
<dbReference type="Pfam" id="PF01474">
    <property type="entry name" value="DAHP_synth_2"/>
    <property type="match status" value="1"/>
</dbReference>
<dbReference type="SUPFAM" id="SSF51569">
    <property type="entry name" value="Aldolase"/>
    <property type="match status" value="1"/>
</dbReference>
<accession>P80576</accession>
<accession>Q7SD77</accession>
<proteinExistence type="evidence at protein level"/>
<comment type="catalytic activity">
    <reaction>
        <text>D-erythrose 4-phosphate + phosphoenolpyruvate + H2O = 7-phospho-2-dehydro-3-deoxy-D-arabino-heptonate + phosphate</text>
        <dbReference type="Rhea" id="RHEA:14717"/>
        <dbReference type="ChEBI" id="CHEBI:15377"/>
        <dbReference type="ChEBI" id="CHEBI:16897"/>
        <dbReference type="ChEBI" id="CHEBI:43474"/>
        <dbReference type="ChEBI" id="CHEBI:58394"/>
        <dbReference type="ChEBI" id="CHEBI:58702"/>
        <dbReference type="EC" id="2.5.1.54"/>
    </reaction>
</comment>
<comment type="pathway">
    <text>Metabolic intermediate biosynthesis; chorismate biosynthesis; chorismate from D-erythrose 4-phosphate and phosphoenolpyruvate: step 1/7.</text>
</comment>
<comment type="subunit">
    <text evidence="1">Homodimer.</text>
</comment>
<comment type="PTM">
    <text>The N-terminus is blocked.</text>
</comment>
<comment type="similarity">
    <text evidence="3">Belongs to the class-II DAHP synthase family.</text>
</comment>
<sequence>MSQQTTPNAPGWAPDSWRSKPIKQCPEYPDKAALEKATNELKTLPPIVLPNEIIRLREHLRDVAQGKAFLLQGGDCAELFSYCQQDVIESKIKLLLQMSLVLLWGADKPVVRIGRMAGQYAKPRSSPVETINGKEVPSFRGDILNGFHPDERELDPNRLVRAYQYSSATLNYIRGAIGSGIADLHGPLDWGLGHVRDPALKSKYQETVDRIQEMLRFMHTIGADQNEKLSTVELFTSHEGLLLEYEEPLTRLLNHPSVRSYPPDSTTPPKKEYYNTSAHFLWIGDRTRQIDHAHVEYFRGIANPIGVKIGPSTPTSDLLPMLRTLNPNREPGKVTLITRYGADKVASLLPAHIRTVESSEYARTVVWQCDPMHGNTQSVSGGIKTRKFSDIFSELQQTLRIHKEEKSYLGGMHLELTGDAVTECLGGGAGLDEDDLSTNYTSFCDPRLNEKQALELAFLVADHYRQERKEKEAERRKSSVV</sequence>